<proteinExistence type="inferred from homology"/>
<sequence>MLEKLIERVLFATRWLLAPLCIAMSLVLVVLGYVFMKELWHMLSHLDTISETDLVLSALGLVDLLFMAGLVLMVLLASYESFVSKLDKVDASEITWLKHTDFNALKLKVSLSIVAISAIFLLKRYMSLEDVLSSIPKDTPLSHNPIFWQVVIHLVFVCSALLAAVTNNIAFSQNNKGH</sequence>
<name>Y970_HELPS</name>
<feature type="chain" id="PRO_1000096269" description="UPF0114 protein HPSH_00970">
    <location>
        <begin position="1"/>
        <end position="178"/>
    </location>
</feature>
<feature type="transmembrane region" description="Helical" evidence="1">
    <location>
        <begin position="15"/>
        <end position="35"/>
    </location>
</feature>
<feature type="transmembrane region" description="Helical" evidence="1">
    <location>
        <begin position="54"/>
        <end position="74"/>
    </location>
</feature>
<feature type="transmembrane region" description="Helical" evidence="1">
    <location>
        <begin position="102"/>
        <end position="122"/>
    </location>
</feature>
<feature type="transmembrane region" description="Helical" evidence="1">
    <location>
        <begin position="145"/>
        <end position="165"/>
    </location>
</feature>
<evidence type="ECO:0000255" key="1">
    <source>
        <dbReference type="HAMAP-Rule" id="MF_00143"/>
    </source>
</evidence>
<dbReference type="EMBL" id="CP001072">
    <property type="protein sequence ID" value="ACD47651.1"/>
    <property type="molecule type" value="Genomic_DNA"/>
</dbReference>
<dbReference type="RefSeq" id="WP_000890447.1">
    <property type="nucleotide sequence ID" value="NC_010698.2"/>
</dbReference>
<dbReference type="KEGG" id="hps:HPSH_00970"/>
<dbReference type="HOGENOM" id="CLU_097887_0_0_7"/>
<dbReference type="GO" id="GO:0005886">
    <property type="term" value="C:plasma membrane"/>
    <property type="evidence" value="ECO:0007669"/>
    <property type="project" value="UniProtKB-SubCell"/>
</dbReference>
<dbReference type="HAMAP" id="MF_00143">
    <property type="entry name" value="UPF0114"/>
    <property type="match status" value="1"/>
</dbReference>
<dbReference type="InterPro" id="IPR005134">
    <property type="entry name" value="UPF0114"/>
</dbReference>
<dbReference type="InterPro" id="IPR020761">
    <property type="entry name" value="UPF0114_bac"/>
</dbReference>
<dbReference type="NCBIfam" id="TIGR00645">
    <property type="entry name" value="HI0507"/>
    <property type="match status" value="1"/>
</dbReference>
<dbReference type="PANTHER" id="PTHR38596">
    <property type="entry name" value="UPF0114 PROTEIN YQHA"/>
    <property type="match status" value="1"/>
</dbReference>
<dbReference type="PANTHER" id="PTHR38596:SF1">
    <property type="entry name" value="UPF0114 PROTEIN YQHA"/>
    <property type="match status" value="1"/>
</dbReference>
<dbReference type="Pfam" id="PF03350">
    <property type="entry name" value="UPF0114"/>
    <property type="match status" value="1"/>
</dbReference>
<gene>
    <name type="ordered locus">HPSH_00970</name>
</gene>
<comment type="subcellular location">
    <subcellularLocation>
        <location evidence="1">Cell membrane</location>
        <topology evidence="1">Multi-pass membrane protein</topology>
    </subcellularLocation>
</comment>
<comment type="similarity">
    <text evidence="1">Belongs to the UPF0114 family.</text>
</comment>
<protein>
    <recommendedName>
        <fullName evidence="1">UPF0114 protein HPSH_00970</fullName>
    </recommendedName>
</protein>
<organism>
    <name type="scientific">Helicobacter pylori (strain Shi470)</name>
    <dbReference type="NCBI Taxonomy" id="512562"/>
    <lineage>
        <taxon>Bacteria</taxon>
        <taxon>Pseudomonadati</taxon>
        <taxon>Campylobacterota</taxon>
        <taxon>Epsilonproteobacteria</taxon>
        <taxon>Campylobacterales</taxon>
        <taxon>Helicobacteraceae</taxon>
        <taxon>Helicobacter</taxon>
    </lineage>
</organism>
<keyword id="KW-1003">Cell membrane</keyword>
<keyword id="KW-0472">Membrane</keyword>
<keyword id="KW-0812">Transmembrane</keyword>
<keyword id="KW-1133">Transmembrane helix</keyword>
<reference key="1">
    <citation type="submission" date="2008-05" db="EMBL/GenBank/DDBJ databases">
        <title>Genome sequence of Helicobacter pylori from the remote Amazon: traces of Asian ancestry of the first Americans.</title>
        <authorList>
            <person name="Kersulyte D."/>
            <person name="Kalia A."/>
            <person name="Gilman R.H."/>
            <person name="Berg D.E."/>
        </authorList>
    </citation>
    <scope>NUCLEOTIDE SEQUENCE [LARGE SCALE GENOMIC DNA]</scope>
    <source>
        <strain>Shi470</strain>
    </source>
</reference>
<accession>B2US19</accession>